<feature type="chain" id="PRO_1000093241" description="Phosphomethylpyrimidine synthase">
    <location>
        <begin position="1"/>
        <end position="432"/>
    </location>
</feature>
<feature type="binding site" evidence="1">
    <location>
        <position position="66"/>
    </location>
    <ligand>
        <name>substrate</name>
    </ligand>
</feature>
<feature type="binding site" evidence="1">
    <location>
        <position position="95"/>
    </location>
    <ligand>
        <name>substrate</name>
    </ligand>
</feature>
<feature type="binding site" evidence="1">
    <location>
        <position position="124"/>
    </location>
    <ligand>
        <name>substrate</name>
    </ligand>
</feature>
<feature type="binding site" evidence="1">
    <location>
        <position position="163"/>
    </location>
    <ligand>
        <name>substrate</name>
    </ligand>
</feature>
<feature type="binding site" evidence="1">
    <location>
        <begin position="185"/>
        <end position="187"/>
    </location>
    <ligand>
        <name>substrate</name>
    </ligand>
</feature>
<feature type="binding site" evidence="1">
    <location>
        <begin position="226"/>
        <end position="229"/>
    </location>
    <ligand>
        <name>substrate</name>
    </ligand>
</feature>
<feature type="binding site" evidence="1">
    <location>
        <position position="265"/>
    </location>
    <ligand>
        <name>substrate</name>
    </ligand>
</feature>
<feature type="binding site" evidence="1">
    <location>
        <position position="269"/>
    </location>
    <ligand>
        <name>Zn(2+)</name>
        <dbReference type="ChEBI" id="CHEBI:29105"/>
    </ligand>
</feature>
<feature type="binding site" evidence="1">
    <location>
        <position position="292"/>
    </location>
    <ligand>
        <name>substrate</name>
    </ligand>
</feature>
<feature type="binding site" evidence="1">
    <location>
        <position position="333"/>
    </location>
    <ligand>
        <name>Zn(2+)</name>
        <dbReference type="ChEBI" id="CHEBI:29105"/>
    </ligand>
</feature>
<feature type="binding site" evidence="1">
    <location>
        <position position="409"/>
    </location>
    <ligand>
        <name>[4Fe-4S] cluster</name>
        <dbReference type="ChEBI" id="CHEBI:49883"/>
        <note>4Fe-4S-S-AdoMet</note>
    </ligand>
</feature>
<feature type="binding site" evidence="1">
    <location>
        <position position="412"/>
    </location>
    <ligand>
        <name>[4Fe-4S] cluster</name>
        <dbReference type="ChEBI" id="CHEBI:49883"/>
        <note>4Fe-4S-S-AdoMet</note>
    </ligand>
</feature>
<feature type="binding site" evidence="1">
    <location>
        <position position="416"/>
    </location>
    <ligand>
        <name>[4Fe-4S] cluster</name>
        <dbReference type="ChEBI" id="CHEBI:49883"/>
        <note>4Fe-4S-S-AdoMet</note>
    </ligand>
</feature>
<comment type="function">
    <text evidence="1">Catalyzes the synthesis of the hydroxymethylpyrimidine phosphate (HMP-P) moiety of thiamine from aminoimidazole ribotide (AIR) in a radical S-adenosyl-L-methionine (SAM)-dependent reaction.</text>
</comment>
<comment type="catalytic activity">
    <reaction evidence="1">
        <text>5-amino-1-(5-phospho-beta-D-ribosyl)imidazole + S-adenosyl-L-methionine = 4-amino-2-methyl-5-(phosphooxymethyl)pyrimidine + CO + 5'-deoxyadenosine + formate + L-methionine + 3 H(+)</text>
        <dbReference type="Rhea" id="RHEA:24840"/>
        <dbReference type="ChEBI" id="CHEBI:15378"/>
        <dbReference type="ChEBI" id="CHEBI:15740"/>
        <dbReference type="ChEBI" id="CHEBI:17245"/>
        <dbReference type="ChEBI" id="CHEBI:17319"/>
        <dbReference type="ChEBI" id="CHEBI:57844"/>
        <dbReference type="ChEBI" id="CHEBI:58354"/>
        <dbReference type="ChEBI" id="CHEBI:59789"/>
        <dbReference type="ChEBI" id="CHEBI:137981"/>
        <dbReference type="EC" id="4.1.99.17"/>
    </reaction>
</comment>
<comment type="cofactor">
    <cofactor evidence="1">
        <name>[4Fe-4S] cluster</name>
        <dbReference type="ChEBI" id="CHEBI:49883"/>
    </cofactor>
    <text evidence="1">Binds 1 [4Fe-4S] cluster per subunit. The cluster is coordinated with 3 cysteines and an exchangeable S-adenosyl-L-methionine.</text>
</comment>
<comment type="pathway">
    <text evidence="1">Cofactor biosynthesis; thiamine diphosphate biosynthesis.</text>
</comment>
<comment type="similarity">
    <text evidence="1">Belongs to the ThiC family.</text>
</comment>
<name>THIC_THEP3</name>
<accession>B0KD66</accession>
<gene>
    <name evidence="1" type="primary">thiC</name>
    <name type="ordered locus">Teth39_0498</name>
</gene>
<dbReference type="EC" id="4.1.99.17" evidence="1"/>
<dbReference type="EMBL" id="CP000924">
    <property type="protein sequence ID" value="ABY94164.1"/>
    <property type="molecule type" value="Genomic_DNA"/>
</dbReference>
<dbReference type="RefSeq" id="WP_012269032.1">
    <property type="nucleotide sequence ID" value="NC_010321.1"/>
</dbReference>
<dbReference type="SMR" id="B0KD66"/>
<dbReference type="STRING" id="340099.Teth39_0498"/>
<dbReference type="KEGG" id="tpd:Teth39_0498"/>
<dbReference type="eggNOG" id="COG0422">
    <property type="taxonomic scope" value="Bacteria"/>
</dbReference>
<dbReference type="HOGENOM" id="CLU_013181_2_2_9"/>
<dbReference type="UniPathway" id="UPA00060"/>
<dbReference type="Proteomes" id="UP000002156">
    <property type="component" value="Chromosome"/>
</dbReference>
<dbReference type="GO" id="GO:0051539">
    <property type="term" value="F:4 iron, 4 sulfur cluster binding"/>
    <property type="evidence" value="ECO:0007669"/>
    <property type="project" value="UniProtKB-KW"/>
</dbReference>
<dbReference type="GO" id="GO:0016830">
    <property type="term" value="F:carbon-carbon lyase activity"/>
    <property type="evidence" value="ECO:0007669"/>
    <property type="project" value="InterPro"/>
</dbReference>
<dbReference type="GO" id="GO:0008270">
    <property type="term" value="F:zinc ion binding"/>
    <property type="evidence" value="ECO:0007669"/>
    <property type="project" value="UniProtKB-UniRule"/>
</dbReference>
<dbReference type="GO" id="GO:0009228">
    <property type="term" value="P:thiamine biosynthetic process"/>
    <property type="evidence" value="ECO:0007669"/>
    <property type="project" value="UniProtKB-KW"/>
</dbReference>
<dbReference type="GO" id="GO:0009229">
    <property type="term" value="P:thiamine diphosphate biosynthetic process"/>
    <property type="evidence" value="ECO:0007669"/>
    <property type="project" value="UniProtKB-UniRule"/>
</dbReference>
<dbReference type="FunFam" id="3.20.20.540:FF:000001">
    <property type="entry name" value="Phosphomethylpyrimidine synthase"/>
    <property type="match status" value="1"/>
</dbReference>
<dbReference type="Gene3D" id="6.10.250.620">
    <property type="match status" value="1"/>
</dbReference>
<dbReference type="Gene3D" id="3.20.20.540">
    <property type="entry name" value="Radical SAM ThiC family, central domain"/>
    <property type="match status" value="1"/>
</dbReference>
<dbReference type="HAMAP" id="MF_00089">
    <property type="entry name" value="ThiC"/>
    <property type="match status" value="1"/>
</dbReference>
<dbReference type="InterPro" id="IPR037509">
    <property type="entry name" value="ThiC"/>
</dbReference>
<dbReference type="InterPro" id="IPR038521">
    <property type="entry name" value="ThiC/Bza_core_dom"/>
</dbReference>
<dbReference type="InterPro" id="IPR002817">
    <property type="entry name" value="ThiC/BzaA/B"/>
</dbReference>
<dbReference type="NCBIfam" id="NF009895">
    <property type="entry name" value="PRK13352.1"/>
    <property type="match status" value="1"/>
</dbReference>
<dbReference type="NCBIfam" id="TIGR00190">
    <property type="entry name" value="thiC"/>
    <property type="match status" value="1"/>
</dbReference>
<dbReference type="PANTHER" id="PTHR30557:SF1">
    <property type="entry name" value="PHOSPHOMETHYLPYRIMIDINE SYNTHASE, CHLOROPLASTIC"/>
    <property type="match status" value="1"/>
</dbReference>
<dbReference type="PANTHER" id="PTHR30557">
    <property type="entry name" value="THIAMINE BIOSYNTHESIS PROTEIN THIC"/>
    <property type="match status" value="1"/>
</dbReference>
<dbReference type="Pfam" id="PF01964">
    <property type="entry name" value="ThiC_Rad_SAM"/>
    <property type="match status" value="1"/>
</dbReference>
<dbReference type="SFLD" id="SFLDF00407">
    <property type="entry name" value="phosphomethylpyrimidine_syntha"/>
    <property type="match status" value="1"/>
</dbReference>
<dbReference type="SFLD" id="SFLDG01114">
    <property type="entry name" value="phosphomethylpyrimidine_syntha"/>
    <property type="match status" value="1"/>
</dbReference>
<dbReference type="SFLD" id="SFLDS00113">
    <property type="entry name" value="Radical_SAM_Phosphomethylpyrim"/>
    <property type="match status" value="1"/>
</dbReference>
<evidence type="ECO:0000255" key="1">
    <source>
        <dbReference type="HAMAP-Rule" id="MF_00089"/>
    </source>
</evidence>
<sequence length="432" mass="46801">MTQLEYALSGIVTKEMKIVAEYEGVDEEFILEGVKKGEIVIPSNINHKNLIPKGIGRGLSTKVNANIGTSDAYPEIEKEIEKLNVAVKAGADAVMDLSTGGDINQSCRKILENSPVPVGTVPMYQAAVESISKYGSIVAMPEEFIFEVIEEQAKDGVDFITVHCGLTFESLKKLKDNGRVMDIVSRGGSFTIAWMLHNNKENPLYKHFDRLLDIAKKYDITLSLGDGLRPGCLEDATDAAQIQELIILGELVKKSREAGVQVMVEGPGHVPIDQIEANVKLQKQLCHNAPFYVLGPIVTDIAPGYDHITSAIGGAIAAASGADFLCYVTPAEHLGLPDKEDVKEGVIAAKIAAHAADIAKGVKGAKEKDLTMARARKALNWDEQIKLSIDPDKAFKYRVNKNISTAKTCSMCGKFCAMKIVSEYLGTSTMTC</sequence>
<keyword id="KW-0004">4Fe-4S</keyword>
<keyword id="KW-0408">Iron</keyword>
<keyword id="KW-0411">Iron-sulfur</keyword>
<keyword id="KW-0456">Lyase</keyword>
<keyword id="KW-0479">Metal-binding</keyword>
<keyword id="KW-1185">Reference proteome</keyword>
<keyword id="KW-0949">S-adenosyl-L-methionine</keyword>
<keyword id="KW-0784">Thiamine biosynthesis</keyword>
<keyword id="KW-0862">Zinc</keyword>
<protein>
    <recommendedName>
        <fullName evidence="1">Phosphomethylpyrimidine synthase</fullName>
        <ecNumber evidence="1">4.1.99.17</ecNumber>
    </recommendedName>
    <alternativeName>
        <fullName evidence="1">Hydroxymethylpyrimidine phosphate synthase</fullName>
        <shortName evidence="1">HMP-P synthase</shortName>
        <shortName evidence="1">HMP-phosphate synthase</shortName>
        <shortName evidence="1">HMPP synthase</shortName>
    </alternativeName>
    <alternativeName>
        <fullName evidence="1">Thiamine biosynthesis protein ThiC</fullName>
    </alternativeName>
</protein>
<proteinExistence type="inferred from homology"/>
<reference key="1">
    <citation type="submission" date="2008-01" db="EMBL/GenBank/DDBJ databases">
        <title>Complete sequence of Thermoanaerobacter pseudethanolicus 39E.</title>
        <authorList>
            <person name="Copeland A."/>
            <person name="Lucas S."/>
            <person name="Lapidus A."/>
            <person name="Barry K."/>
            <person name="Glavina del Rio T."/>
            <person name="Dalin E."/>
            <person name="Tice H."/>
            <person name="Pitluck S."/>
            <person name="Bruce D."/>
            <person name="Goodwin L."/>
            <person name="Saunders E."/>
            <person name="Brettin T."/>
            <person name="Detter J.C."/>
            <person name="Han C."/>
            <person name="Schmutz J."/>
            <person name="Larimer F."/>
            <person name="Land M."/>
            <person name="Hauser L."/>
            <person name="Kyrpides N."/>
            <person name="Lykidis A."/>
            <person name="Hemme C."/>
            <person name="Fields M.W."/>
            <person name="He Z."/>
            <person name="Zhou J."/>
            <person name="Richardson P."/>
        </authorList>
    </citation>
    <scope>NUCLEOTIDE SEQUENCE [LARGE SCALE GENOMIC DNA]</scope>
    <source>
        <strain>ATCC 33223 / DSM 2355 / 39E</strain>
    </source>
</reference>
<organism>
    <name type="scientific">Thermoanaerobacter pseudethanolicus (strain ATCC 33223 / 39E)</name>
    <name type="common">Clostridium thermohydrosulfuricum</name>
    <dbReference type="NCBI Taxonomy" id="340099"/>
    <lineage>
        <taxon>Bacteria</taxon>
        <taxon>Bacillati</taxon>
        <taxon>Bacillota</taxon>
        <taxon>Clostridia</taxon>
        <taxon>Thermoanaerobacterales</taxon>
        <taxon>Thermoanaerobacteraceae</taxon>
        <taxon>Thermoanaerobacter</taxon>
    </lineage>
</organism>